<organism>
    <name type="scientific">Escherichia coli O7:K1 (strain IAI39 / ExPEC)</name>
    <dbReference type="NCBI Taxonomy" id="585057"/>
    <lineage>
        <taxon>Bacteria</taxon>
        <taxon>Pseudomonadati</taxon>
        <taxon>Pseudomonadota</taxon>
        <taxon>Gammaproteobacteria</taxon>
        <taxon>Enterobacterales</taxon>
        <taxon>Enterobacteriaceae</taxon>
        <taxon>Escherichia</taxon>
    </lineage>
</organism>
<name>RRF_ECO7I</name>
<comment type="function">
    <text evidence="1">Responsible for the release of ribosomes from messenger RNA at the termination of protein biosynthesis. May increase the efficiency of translation by recycling ribosomes from one round of translation to another.</text>
</comment>
<comment type="subcellular location">
    <subcellularLocation>
        <location evidence="1">Cytoplasm</location>
    </subcellularLocation>
</comment>
<comment type="similarity">
    <text evidence="1">Belongs to the RRF family.</text>
</comment>
<dbReference type="EMBL" id="CU928164">
    <property type="protein sequence ID" value="CAR16315.1"/>
    <property type="molecule type" value="Genomic_DNA"/>
</dbReference>
<dbReference type="RefSeq" id="WP_000622418.1">
    <property type="nucleotide sequence ID" value="NC_011750.1"/>
</dbReference>
<dbReference type="RefSeq" id="YP_002406221.1">
    <property type="nucleotide sequence ID" value="NC_011750.1"/>
</dbReference>
<dbReference type="SMR" id="B7NID4"/>
<dbReference type="STRING" id="585057.ECIAI39_0175"/>
<dbReference type="GeneID" id="93777253"/>
<dbReference type="KEGG" id="ect:ECIAI39_0175"/>
<dbReference type="PATRIC" id="fig|585057.6.peg.187"/>
<dbReference type="HOGENOM" id="CLU_073981_2_1_6"/>
<dbReference type="Proteomes" id="UP000000749">
    <property type="component" value="Chromosome"/>
</dbReference>
<dbReference type="GO" id="GO:0005829">
    <property type="term" value="C:cytosol"/>
    <property type="evidence" value="ECO:0007669"/>
    <property type="project" value="GOC"/>
</dbReference>
<dbReference type="GO" id="GO:0043023">
    <property type="term" value="F:ribosomal large subunit binding"/>
    <property type="evidence" value="ECO:0007669"/>
    <property type="project" value="TreeGrafter"/>
</dbReference>
<dbReference type="GO" id="GO:0002184">
    <property type="term" value="P:cytoplasmic translational termination"/>
    <property type="evidence" value="ECO:0007669"/>
    <property type="project" value="TreeGrafter"/>
</dbReference>
<dbReference type="CDD" id="cd00520">
    <property type="entry name" value="RRF"/>
    <property type="match status" value="1"/>
</dbReference>
<dbReference type="FunFam" id="1.10.132.20:FF:000001">
    <property type="entry name" value="Ribosome-recycling factor"/>
    <property type="match status" value="1"/>
</dbReference>
<dbReference type="FunFam" id="3.30.1360.40:FF:000001">
    <property type="entry name" value="Ribosome-recycling factor"/>
    <property type="match status" value="1"/>
</dbReference>
<dbReference type="Gene3D" id="3.30.1360.40">
    <property type="match status" value="1"/>
</dbReference>
<dbReference type="Gene3D" id="1.10.132.20">
    <property type="entry name" value="Ribosome-recycling factor"/>
    <property type="match status" value="1"/>
</dbReference>
<dbReference type="HAMAP" id="MF_00040">
    <property type="entry name" value="RRF"/>
    <property type="match status" value="1"/>
</dbReference>
<dbReference type="InterPro" id="IPR002661">
    <property type="entry name" value="Ribosome_recyc_fac"/>
</dbReference>
<dbReference type="InterPro" id="IPR023584">
    <property type="entry name" value="Ribosome_recyc_fac_dom"/>
</dbReference>
<dbReference type="InterPro" id="IPR036191">
    <property type="entry name" value="RRF_sf"/>
</dbReference>
<dbReference type="NCBIfam" id="TIGR00496">
    <property type="entry name" value="frr"/>
    <property type="match status" value="1"/>
</dbReference>
<dbReference type="PANTHER" id="PTHR20982:SF3">
    <property type="entry name" value="MITOCHONDRIAL RIBOSOME RECYCLING FACTOR PSEUDO 1"/>
    <property type="match status" value="1"/>
</dbReference>
<dbReference type="PANTHER" id="PTHR20982">
    <property type="entry name" value="RIBOSOME RECYCLING FACTOR"/>
    <property type="match status" value="1"/>
</dbReference>
<dbReference type="Pfam" id="PF01765">
    <property type="entry name" value="RRF"/>
    <property type="match status" value="1"/>
</dbReference>
<dbReference type="SUPFAM" id="SSF55194">
    <property type="entry name" value="Ribosome recycling factor, RRF"/>
    <property type="match status" value="1"/>
</dbReference>
<feature type="chain" id="PRO_1000194928" description="Ribosome-recycling factor">
    <location>
        <begin position="1"/>
        <end position="185"/>
    </location>
</feature>
<feature type="modified residue" description="N6-acetyllysine" evidence="1">
    <location>
        <position position="162"/>
    </location>
</feature>
<accession>B7NID4</accession>
<evidence type="ECO:0000255" key="1">
    <source>
        <dbReference type="HAMAP-Rule" id="MF_00040"/>
    </source>
</evidence>
<protein>
    <recommendedName>
        <fullName evidence="1">Ribosome-recycling factor</fullName>
        <shortName evidence="1">RRF</shortName>
    </recommendedName>
    <alternativeName>
        <fullName evidence="1">Ribosome-releasing factor</fullName>
    </alternativeName>
</protein>
<keyword id="KW-0007">Acetylation</keyword>
<keyword id="KW-0963">Cytoplasm</keyword>
<keyword id="KW-0648">Protein biosynthesis</keyword>
<reference key="1">
    <citation type="journal article" date="2009" name="PLoS Genet.">
        <title>Organised genome dynamics in the Escherichia coli species results in highly diverse adaptive paths.</title>
        <authorList>
            <person name="Touchon M."/>
            <person name="Hoede C."/>
            <person name="Tenaillon O."/>
            <person name="Barbe V."/>
            <person name="Baeriswyl S."/>
            <person name="Bidet P."/>
            <person name="Bingen E."/>
            <person name="Bonacorsi S."/>
            <person name="Bouchier C."/>
            <person name="Bouvet O."/>
            <person name="Calteau A."/>
            <person name="Chiapello H."/>
            <person name="Clermont O."/>
            <person name="Cruveiller S."/>
            <person name="Danchin A."/>
            <person name="Diard M."/>
            <person name="Dossat C."/>
            <person name="Karoui M.E."/>
            <person name="Frapy E."/>
            <person name="Garry L."/>
            <person name="Ghigo J.M."/>
            <person name="Gilles A.M."/>
            <person name="Johnson J."/>
            <person name="Le Bouguenec C."/>
            <person name="Lescat M."/>
            <person name="Mangenot S."/>
            <person name="Martinez-Jehanne V."/>
            <person name="Matic I."/>
            <person name="Nassif X."/>
            <person name="Oztas S."/>
            <person name="Petit M.A."/>
            <person name="Pichon C."/>
            <person name="Rouy Z."/>
            <person name="Ruf C.S."/>
            <person name="Schneider D."/>
            <person name="Tourret J."/>
            <person name="Vacherie B."/>
            <person name="Vallenet D."/>
            <person name="Medigue C."/>
            <person name="Rocha E.P.C."/>
            <person name="Denamur E."/>
        </authorList>
    </citation>
    <scope>NUCLEOTIDE SEQUENCE [LARGE SCALE GENOMIC DNA]</scope>
    <source>
        <strain>IAI39 / ExPEC</strain>
    </source>
</reference>
<sequence>MISDIRKDAEVRMDKCVEAFKTQISKIRTGRASPSLLDGIVVEYYGTPTPLRQLASVTVEDSRTLKINVFDRSMSPAVEKAIMASDLGLNPNSAGSDIRVPLPPLTEERRKDLTKIVRGEAEQARVAVRNVRRDANDKVKALLKDKEISEDDDRRSQDDVQKLTDAAIKKIEAALADKEAELMQF</sequence>
<proteinExistence type="inferred from homology"/>
<gene>
    <name evidence="1" type="primary">frr</name>
    <name type="ordered locus">ECIAI39_0175</name>
</gene>